<evidence type="ECO:0000255" key="1">
    <source>
        <dbReference type="HAMAP-Rule" id="MF_00175"/>
    </source>
</evidence>
<evidence type="ECO:0000255" key="2">
    <source>
        <dbReference type="PROSITE-ProRule" id="PRU01250"/>
    </source>
</evidence>
<evidence type="ECO:0000305" key="3"/>
<proteinExistence type="inferred from homology"/>
<sequence>MSKVSNGGGDSKNTLYCSFCGKSQHEVRKLIAGPTVFICDECVELCMDIIREENKSSMVKSREGVPTPQEIMAVLDDYVIGQKDAKRVLSVAVHNHYKRLAHQSKNSDIELAKSNILLVGPTGCGKTYLAQTLARIIDVPFIMADATTLTEAGYVGEDVENIILKLLQAADYNVERAQRGIVYIDEVDKISRKSDNPSITRDVSGEGVQQALLKIMEGTVASVPPQGGRKHPQQEFLQVDTTNILFICGGAFAGLDRIISARGEKTSIGFGATVKSVDERRIGEVFKELEPEDLLKFGLIPEFVGRLPVIATLEDLDVDALVQILTEPKNALVKQYQRLFDMENVELVFHDDALRAIANKAVERKTGARGLRSIMEKILLDTMFELPTLEGVREVVISGDVVDGSARPLYIYAERQDEKGNVSA</sequence>
<reference key="1">
    <citation type="submission" date="1999-12" db="EMBL/GenBank/DDBJ databases">
        <title>The Brucella abortus clpP and clpX are not subject to classical heat shock regulation and are critical for cell viability.</title>
        <authorList>
            <person name="Robertson G.T."/>
            <person name="Roop R.M. II"/>
        </authorList>
    </citation>
    <scope>NUCLEOTIDE SEQUENCE [GENOMIC DNA]</scope>
</reference>
<reference key="2">
    <citation type="journal article" date="2005" name="J. Bacteriol.">
        <title>Completion of the genome sequence of Brucella abortus and comparison to the highly similar genomes of Brucella melitensis and Brucella suis.</title>
        <authorList>
            <person name="Halling S.M."/>
            <person name="Peterson-Burch B.D."/>
            <person name="Bricker B.J."/>
            <person name="Zuerner R.L."/>
            <person name="Qing Z."/>
            <person name="Li L.-L."/>
            <person name="Kapur V."/>
            <person name="Alt D.P."/>
            <person name="Olsen S.C."/>
        </authorList>
    </citation>
    <scope>NUCLEOTIDE SEQUENCE [LARGE SCALE GENOMIC DNA]</scope>
    <source>
        <strain>9-941</strain>
    </source>
</reference>
<feature type="chain" id="PRO_0000160325" description="ATP-dependent Clp protease ATP-binding subunit ClpX">
    <location>
        <begin position="1"/>
        <end position="424"/>
    </location>
</feature>
<feature type="domain" description="ClpX-type ZB" evidence="2">
    <location>
        <begin position="5"/>
        <end position="58"/>
    </location>
</feature>
<feature type="binding site" evidence="2">
    <location>
        <position position="17"/>
    </location>
    <ligand>
        <name>Zn(2+)</name>
        <dbReference type="ChEBI" id="CHEBI:29105"/>
    </ligand>
</feature>
<feature type="binding site" evidence="2">
    <location>
        <position position="20"/>
    </location>
    <ligand>
        <name>Zn(2+)</name>
        <dbReference type="ChEBI" id="CHEBI:29105"/>
    </ligand>
</feature>
<feature type="binding site" evidence="2">
    <location>
        <position position="39"/>
    </location>
    <ligand>
        <name>Zn(2+)</name>
        <dbReference type="ChEBI" id="CHEBI:29105"/>
    </ligand>
</feature>
<feature type="binding site" evidence="2">
    <location>
        <position position="42"/>
    </location>
    <ligand>
        <name>Zn(2+)</name>
        <dbReference type="ChEBI" id="CHEBI:29105"/>
    </ligand>
</feature>
<feature type="binding site" evidence="1">
    <location>
        <begin position="121"/>
        <end position="128"/>
    </location>
    <ligand>
        <name>ATP</name>
        <dbReference type="ChEBI" id="CHEBI:30616"/>
    </ligand>
</feature>
<feature type="sequence conflict" description="In Ref. 1; AAF32319." evidence="3" ref="1">
    <original>PQE</original>
    <variation>RRQ</variation>
    <location>
        <begin position="68"/>
        <end position="70"/>
    </location>
</feature>
<feature type="sequence conflict" description="In Ref. 1." evidence="3" ref="1">
    <location>
        <position position="178"/>
    </location>
</feature>
<feature type="sequence conflict" description="In Ref. 1." evidence="3" ref="1">
    <original>G</original>
    <variation>S</variation>
    <location>
        <position position="180"/>
    </location>
</feature>
<organism>
    <name type="scientific">Brucella abortus biovar 1 (strain 9-941)</name>
    <dbReference type="NCBI Taxonomy" id="262698"/>
    <lineage>
        <taxon>Bacteria</taxon>
        <taxon>Pseudomonadati</taxon>
        <taxon>Pseudomonadota</taxon>
        <taxon>Alphaproteobacteria</taxon>
        <taxon>Hyphomicrobiales</taxon>
        <taxon>Brucellaceae</taxon>
        <taxon>Brucella/Ochrobactrum group</taxon>
        <taxon>Brucella</taxon>
    </lineage>
</organism>
<gene>
    <name evidence="1" type="primary">clpX</name>
    <name type="ordered locus">BruAb1_1114</name>
</gene>
<protein>
    <recommendedName>
        <fullName evidence="1">ATP-dependent Clp protease ATP-binding subunit ClpX</fullName>
    </recommendedName>
</protein>
<dbReference type="EMBL" id="AF218420">
    <property type="protein sequence ID" value="AAF32319.1"/>
    <property type="molecule type" value="Genomic_DNA"/>
</dbReference>
<dbReference type="EMBL" id="AE017223">
    <property type="protein sequence ID" value="AAX74455.1"/>
    <property type="molecule type" value="Genomic_DNA"/>
</dbReference>
<dbReference type="RefSeq" id="WP_002964236.1">
    <property type="nucleotide sequence ID" value="NC_006932.1"/>
</dbReference>
<dbReference type="SMR" id="Q9L7X5"/>
<dbReference type="EnsemblBacteria" id="AAX74455">
    <property type="protein sequence ID" value="AAX74455"/>
    <property type="gene ID" value="BruAb1_1114"/>
</dbReference>
<dbReference type="GeneID" id="93016553"/>
<dbReference type="KEGG" id="bmb:BruAb1_1114"/>
<dbReference type="HOGENOM" id="CLU_014218_8_2_5"/>
<dbReference type="Proteomes" id="UP000000540">
    <property type="component" value="Chromosome I"/>
</dbReference>
<dbReference type="GO" id="GO:0009376">
    <property type="term" value="C:HslUV protease complex"/>
    <property type="evidence" value="ECO:0007669"/>
    <property type="project" value="TreeGrafter"/>
</dbReference>
<dbReference type="GO" id="GO:0005524">
    <property type="term" value="F:ATP binding"/>
    <property type="evidence" value="ECO:0007669"/>
    <property type="project" value="UniProtKB-UniRule"/>
</dbReference>
<dbReference type="GO" id="GO:0016887">
    <property type="term" value="F:ATP hydrolysis activity"/>
    <property type="evidence" value="ECO:0007669"/>
    <property type="project" value="InterPro"/>
</dbReference>
<dbReference type="GO" id="GO:0140662">
    <property type="term" value="F:ATP-dependent protein folding chaperone"/>
    <property type="evidence" value="ECO:0007669"/>
    <property type="project" value="InterPro"/>
</dbReference>
<dbReference type="GO" id="GO:0046983">
    <property type="term" value="F:protein dimerization activity"/>
    <property type="evidence" value="ECO:0007669"/>
    <property type="project" value="InterPro"/>
</dbReference>
<dbReference type="GO" id="GO:0051082">
    <property type="term" value="F:unfolded protein binding"/>
    <property type="evidence" value="ECO:0007669"/>
    <property type="project" value="UniProtKB-UniRule"/>
</dbReference>
<dbReference type="GO" id="GO:0008270">
    <property type="term" value="F:zinc ion binding"/>
    <property type="evidence" value="ECO:0007669"/>
    <property type="project" value="InterPro"/>
</dbReference>
<dbReference type="GO" id="GO:0051301">
    <property type="term" value="P:cell division"/>
    <property type="evidence" value="ECO:0007669"/>
    <property type="project" value="TreeGrafter"/>
</dbReference>
<dbReference type="GO" id="GO:0051603">
    <property type="term" value="P:proteolysis involved in protein catabolic process"/>
    <property type="evidence" value="ECO:0007669"/>
    <property type="project" value="TreeGrafter"/>
</dbReference>
<dbReference type="CDD" id="cd19497">
    <property type="entry name" value="RecA-like_ClpX"/>
    <property type="match status" value="1"/>
</dbReference>
<dbReference type="FunFam" id="1.10.8.60:FF:000002">
    <property type="entry name" value="ATP-dependent Clp protease ATP-binding subunit ClpX"/>
    <property type="match status" value="1"/>
</dbReference>
<dbReference type="FunFam" id="3.40.50.300:FF:000005">
    <property type="entry name" value="ATP-dependent Clp protease ATP-binding subunit ClpX"/>
    <property type="match status" value="1"/>
</dbReference>
<dbReference type="Gene3D" id="1.10.8.60">
    <property type="match status" value="1"/>
</dbReference>
<dbReference type="Gene3D" id="6.20.220.10">
    <property type="entry name" value="ClpX chaperone, C4-type zinc finger domain"/>
    <property type="match status" value="1"/>
</dbReference>
<dbReference type="Gene3D" id="3.40.50.300">
    <property type="entry name" value="P-loop containing nucleotide triphosphate hydrolases"/>
    <property type="match status" value="1"/>
</dbReference>
<dbReference type="HAMAP" id="MF_00175">
    <property type="entry name" value="ClpX"/>
    <property type="match status" value="1"/>
</dbReference>
<dbReference type="InterPro" id="IPR003593">
    <property type="entry name" value="AAA+_ATPase"/>
</dbReference>
<dbReference type="InterPro" id="IPR050052">
    <property type="entry name" value="ATP-dep_Clp_protease_ClpX"/>
</dbReference>
<dbReference type="InterPro" id="IPR003959">
    <property type="entry name" value="ATPase_AAA_core"/>
</dbReference>
<dbReference type="InterPro" id="IPR019489">
    <property type="entry name" value="Clp_ATPase_C"/>
</dbReference>
<dbReference type="InterPro" id="IPR004487">
    <property type="entry name" value="Clp_protease_ATP-bd_su_ClpX"/>
</dbReference>
<dbReference type="InterPro" id="IPR046425">
    <property type="entry name" value="ClpX_bact"/>
</dbReference>
<dbReference type="InterPro" id="IPR027417">
    <property type="entry name" value="P-loop_NTPase"/>
</dbReference>
<dbReference type="InterPro" id="IPR010603">
    <property type="entry name" value="Znf_CppX_C4"/>
</dbReference>
<dbReference type="InterPro" id="IPR038366">
    <property type="entry name" value="Znf_CppX_C4_sf"/>
</dbReference>
<dbReference type="NCBIfam" id="TIGR00382">
    <property type="entry name" value="clpX"/>
    <property type="match status" value="1"/>
</dbReference>
<dbReference type="NCBIfam" id="NF003745">
    <property type="entry name" value="PRK05342.1"/>
    <property type="match status" value="1"/>
</dbReference>
<dbReference type="PANTHER" id="PTHR48102:SF7">
    <property type="entry name" value="ATP-DEPENDENT CLP PROTEASE ATP-BINDING SUBUNIT CLPX-LIKE, MITOCHONDRIAL"/>
    <property type="match status" value="1"/>
</dbReference>
<dbReference type="PANTHER" id="PTHR48102">
    <property type="entry name" value="ATP-DEPENDENT CLP PROTEASE ATP-BINDING SUBUNIT CLPX-LIKE, MITOCHONDRIAL-RELATED"/>
    <property type="match status" value="1"/>
</dbReference>
<dbReference type="Pfam" id="PF07724">
    <property type="entry name" value="AAA_2"/>
    <property type="match status" value="1"/>
</dbReference>
<dbReference type="Pfam" id="PF10431">
    <property type="entry name" value="ClpB_D2-small"/>
    <property type="match status" value="1"/>
</dbReference>
<dbReference type="Pfam" id="PF06689">
    <property type="entry name" value="zf-C4_ClpX"/>
    <property type="match status" value="1"/>
</dbReference>
<dbReference type="SMART" id="SM00382">
    <property type="entry name" value="AAA"/>
    <property type="match status" value="1"/>
</dbReference>
<dbReference type="SMART" id="SM01086">
    <property type="entry name" value="ClpB_D2-small"/>
    <property type="match status" value="1"/>
</dbReference>
<dbReference type="SMART" id="SM00994">
    <property type="entry name" value="zf-C4_ClpX"/>
    <property type="match status" value="1"/>
</dbReference>
<dbReference type="SUPFAM" id="SSF57716">
    <property type="entry name" value="Glucocorticoid receptor-like (DNA-binding domain)"/>
    <property type="match status" value="1"/>
</dbReference>
<dbReference type="SUPFAM" id="SSF52540">
    <property type="entry name" value="P-loop containing nucleoside triphosphate hydrolases"/>
    <property type="match status" value="1"/>
</dbReference>
<dbReference type="PROSITE" id="PS51902">
    <property type="entry name" value="CLPX_ZB"/>
    <property type="match status" value="1"/>
</dbReference>
<keyword id="KW-0067">ATP-binding</keyword>
<keyword id="KW-0143">Chaperone</keyword>
<keyword id="KW-0479">Metal-binding</keyword>
<keyword id="KW-0547">Nucleotide-binding</keyword>
<keyword id="KW-0862">Zinc</keyword>
<name>CLPX_BRUAB</name>
<comment type="function">
    <text evidence="1">ATP-dependent specificity component of the Clp protease. It directs the protease to specific substrates. Can perform chaperone functions in the absence of ClpP.</text>
</comment>
<comment type="subunit">
    <text evidence="1">Component of the ClpX-ClpP complex. Forms a hexameric ring that, in the presence of ATP, binds to fourteen ClpP subunits assembled into a disk-like structure with a central cavity, resembling the structure of eukaryotic proteasomes.</text>
</comment>
<comment type="similarity">
    <text evidence="1">Belongs to the ClpX chaperone family.</text>
</comment>
<accession>Q9L7X5</accession>
<accession>Q57D29</accession>